<proteinExistence type="inferred from homology"/>
<accession>Q30YX5</accession>
<gene>
    <name evidence="1" type="primary">ruvC</name>
    <name type="ordered locus">Dde_2324</name>
</gene>
<protein>
    <recommendedName>
        <fullName evidence="1">Crossover junction endodeoxyribonuclease RuvC</fullName>
        <ecNumber evidence="1">3.1.21.10</ecNumber>
    </recommendedName>
    <alternativeName>
        <fullName evidence="1">Holliday junction nuclease RuvC</fullName>
    </alternativeName>
    <alternativeName>
        <fullName evidence="1">Holliday junction resolvase RuvC</fullName>
    </alternativeName>
</protein>
<evidence type="ECO:0000255" key="1">
    <source>
        <dbReference type="HAMAP-Rule" id="MF_00034"/>
    </source>
</evidence>
<comment type="function">
    <text evidence="1">The RuvA-RuvB-RuvC complex processes Holliday junction (HJ) DNA during genetic recombination and DNA repair. Endonuclease that resolves HJ intermediates. Cleaves cruciform DNA by making single-stranded nicks across the HJ at symmetrical positions within the homologous arms, yielding a 5'-phosphate and a 3'-hydroxyl group; requires a central core of homology in the junction. The consensus cleavage sequence is 5'-(A/T)TT(C/G)-3'. Cleavage occurs on the 3'-side of the TT dinucleotide at the point of strand exchange. HJ branch migration catalyzed by RuvA-RuvB allows RuvC to scan DNA until it finds its consensus sequence, where it cleaves and resolves the cruciform DNA.</text>
</comment>
<comment type="catalytic activity">
    <reaction evidence="1">
        <text>Endonucleolytic cleavage at a junction such as a reciprocal single-stranded crossover between two homologous DNA duplexes (Holliday junction).</text>
        <dbReference type="EC" id="3.1.21.10"/>
    </reaction>
</comment>
<comment type="cofactor">
    <cofactor evidence="1">
        <name>Mg(2+)</name>
        <dbReference type="ChEBI" id="CHEBI:18420"/>
    </cofactor>
    <text evidence="1">Binds 2 Mg(2+) ion per subunit.</text>
</comment>
<comment type="subunit">
    <text evidence="1">Homodimer which binds Holliday junction (HJ) DNA. The HJ becomes 2-fold symmetrical on binding to RuvC with unstacked arms; it has a different conformation from HJ DNA in complex with RuvA. In the full resolvosome a probable DNA-RuvA(4)-RuvB(12)-RuvC(2) complex forms which resolves the HJ.</text>
</comment>
<comment type="subcellular location">
    <subcellularLocation>
        <location evidence="1">Cytoplasm</location>
    </subcellularLocation>
</comment>
<comment type="similarity">
    <text evidence="1">Belongs to the RuvC family.</text>
</comment>
<reference key="1">
    <citation type="journal article" date="2011" name="J. Bacteriol.">
        <title>Complete genome sequence and updated annotation of Desulfovibrio alaskensis G20.</title>
        <authorList>
            <person name="Hauser L.J."/>
            <person name="Land M.L."/>
            <person name="Brown S.D."/>
            <person name="Larimer F."/>
            <person name="Keller K.L."/>
            <person name="Rapp-Giles B.J."/>
            <person name="Price M.N."/>
            <person name="Lin M."/>
            <person name="Bruce D.C."/>
            <person name="Detter J.C."/>
            <person name="Tapia R."/>
            <person name="Han C.S."/>
            <person name="Goodwin L.A."/>
            <person name="Cheng J.F."/>
            <person name="Pitluck S."/>
            <person name="Copeland A."/>
            <person name="Lucas S."/>
            <person name="Nolan M."/>
            <person name="Lapidus A.L."/>
            <person name="Palumbo A.V."/>
            <person name="Wall J.D."/>
        </authorList>
    </citation>
    <scope>NUCLEOTIDE SEQUENCE [LARGE SCALE GENOMIC DNA]</scope>
    <source>
        <strain>ATCC BAA-1058 / DSM 17464 / G20</strain>
    </source>
</reference>
<sequence>MTTQGITVLGIDPGSRTTGWGIVREVSGVLTLVDCGAVRPRGDEFSDRLGAIYHGLHEVIARHMPDEASVENVFTAKNAASALKLGQARGAAVAACAAHHLPVASYAPTEIKKTIVGVGRAEKEQVSFMVARLLGVKGDWGPDTGDALAAAICHLNMRRLRRLAAG</sequence>
<organism>
    <name type="scientific">Oleidesulfovibrio alaskensis (strain ATCC BAA-1058 / DSM 17464 / G20)</name>
    <name type="common">Desulfovibrio alaskensis</name>
    <dbReference type="NCBI Taxonomy" id="207559"/>
    <lineage>
        <taxon>Bacteria</taxon>
        <taxon>Pseudomonadati</taxon>
        <taxon>Thermodesulfobacteriota</taxon>
        <taxon>Desulfovibrionia</taxon>
        <taxon>Desulfovibrionales</taxon>
        <taxon>Desulfovibrionaceae</taxon>
        <taxon>Oleidesulfovibrio</taxon>
    </lineage>
</organism>
<feature type="chain" id="PRO_0000225139" description="Crossover junction endodeoxyribonuclease RuvC">
    <location>
        <begin position="1"/>
        <end position="166"/>
    </location>
</feature>
<feature type="active site" evidence="1">
    <location>
        <position position="12"/>
    </location>
</feature>
<feature type="active site" evidence="1">
    <location>
        <position position="71"/>
    </location>
</feature>
<feature type="active site" evidence="1">
    <location>
        <position position="143"/>
    </location>
</feature>
<feature type="binding site" evidence="1">
    <location>
        <position position="12"/>
    </location>
    <ligand>
        <name>Mg(2+)</name>
        <dbReference type="ChEBI" id="CHEBI:18420"/>
        <label>1</label>
    </ligand>
</feature>
<feature type="binding site" evidence="1">
    <location>
        <position position="71"/>
    </location>
    <ligand>
        <name>Mg(2+)</name>
        <dbReference type="ChEBI" id="CHEBI:18420"/>
        <label>2</label>
    </ligand>
</feature>
<feature type="binding site" evidence="1">
    <location>
        <position position="143"/>
    </location>
    <ligand>
        <name>Mg(2+)</name>
        <dbReference type="ChEBI" id="CHEBI:18420"/>
        <label>1</label>
    </ligand>
</feature>
<name>RUVC_OLEA2</name>
<keyword id="KW-0963">Cytoplasm</keyword>
<keyword id="KW-0227">DNA damage</keyword>
<keyword id="KW-0233">DNA recombination</keyword>
<keyword id="KW-0234">DNA repair</keyword>
<keyword id="KW-0238">DNA-binding</keyword>
<keyword id="KW-0255">Endonuclease</keyword>
<keyword id="KW-0378">Hydrolase</keyword>
<keyword id="KW-0460">Magnesium</keyword>
<keyword id="KW-0479">Metal-binding</keyword>
<keyword id="KW-0540">Nuclease</keyword>
<keyword id="KW-1185">Reference proteome</keyword>
<dbReference type="EC" id="3.1.21.10" evidence="1"/>
<dbReference type="EMBL" id="CP000112">
    <property type="protein sequence ID" value="ABB39121.1"/>
    <property type="molecule type" value="Genomic_DNA"/>
</dbReference>
<dbReference type="RefSeq" id="WP_011368201.1">
    <property type="nucleotide sequence ID" value="NC_007519.1"/>
</dbReference>
<dbReference type="SMR" id="Q30YX5"/>
<dbReference type="STRING" id="207559.Dde_2324"/>
<dbReference type="KEGG" id="dde:Dde_2324"/>
<dbReference type="eggNOG" id="COG0817">
    <property type="taxonomic scope" value="Bacteria"/>
</dbReference>
<dbReference type="HOGENOM" id="CLU_091257_2_1_7"/>
<dbReference type="Proteomes" id="UP000002710">
    <property type="component" value="Chromosome"/>
</dbReference>
<dbReference type="GO" id="GO:0005737">
    <property type="term" value="C:cytoplasm"/>
    <property type="evidence" value="ECO:0007669"/>
    <property type="project" value="UniProtKB-SubCell"/>
</dbReference>
<dbReference type="GO" id="GO:0048476">
    <property type="term" value="C:Holliday junction resolvase complex"/>
    <property type="evidence" value="ECO:0007669"/>
    <property type="project" value="UniProtKB-UniRule"/>
</dbReference>
<dbReference type="GO" id="GO:0008821">
    <property type="term" value="F:crossover junction DNA endonuclease activity"/>
    <property type="evidence" value="ECO:0007669"/>
    <property type="project" value="UniProtKB-UniRule"/>
</dbReference>
<dbReference type="GO" id="GO:0003677">
    <property type="term" value="F:DNA binding"/>
    <property type="evidence" value="ECO:0007669"/>
    <property type="project" value="UniProtKB-KW"/>
</dbReference>
<dbReference type="GO" id="GO:0000287">
    <property type="term" value="F:magnesium ion binding"/>
    <property type="evidence" value="ECO:0007669"/>
    <property type="project" value="UniProtKB-UniRule"/>
</dbReference>
<dbReference type="GO" id="GO:0006310">
    <property type="term" value="P:DNA recombination"/>
    <property type="evidence" value="ECO:0007669"/>
    <property type="project" value="UniProtKB-UniRule"/>
</dbReference>
<dbReference type="GO" id="GO:0006281">
    <property type="term" value="P:DNA repair"/>
    <property type="evidence" value="ECO:0007669"/>
    <property type="project" value="UniProtKB-UniRule"/>
</dbReference>
<dbReference type="CDD" id="cd16962">
    <property type="entry name" value="RuvC"/>
    <property type="match status" value="1"/>
</dbReference>
<dbReference type="FunFam" id="3.30.420.10:FF:000002">
    <property type="entry name" value="Crossover junction endodeoxyribonuclease RuvC"/>
    <property type="match status" value="1"/>
</dbReference>
<dbReference type="Gene3D" id="3.30.420.10">
    <property type="entry name" value="Ribonuclease H-like superfamily/Ribonuclease H"/>
    <property type="match status" value="1"/>
</dbReference>
<dbReference type="HAMAP" id="MF_00034">
    <property type="entry name" value="RuvC"/>
    <property type="match status" value="1"/>
</dbReference>
<dbReference type="InterPro" id="IPR012337">
    <property type="entry name" value="RNaseH-like_sf"/>
</dbReference>
<dbReference type="InterPro" id="IPR036397">
    <property type="entry name" value="RNaseH_sf"/>
</dbReference>
<dbReference type="InterPro" id="IPR002176">
    <property type="entry name" value="X-over_junc_endoDNase_RuvC"/>
</dbReference>
<dbReference type="NCBIfam" id="TIGR00228">
    <property type="entry name" value="ruvC"/>
    <property type="match status" value="1"/>
</dbReference>
<dbReference type="PANTHER" id="PTHR30194">
    <property type="entry name" value="CROSSOVER JUNCTION ENDODEOXYRIBONUCLEASE RUVC"/>
    <property type="match status" value="1"/>
</dbReference>
<dbReference type="PANTHER" id="PTHR30194:SF3">
    <property type="entry name" value="CROSSOVER JUNCTION ENDODEOXYRIBONUCLEASE RUVC"/>
    <property type="match status" value="1"/>
</dbReference>
<dbReference type="Pfam" id="PF02075">
    <property type="entry name" value="RuvC"/>
    <property type="match status" value="1"/>
</dbReference>
<dbReference type="PRINTS" id="PR00696">
    <property type="entry name" value="RSOLVASERUVC"/>
</dbReference>
<dbReference type="SUPFAM" id="SSF53098">
    <property type="entry name" value="Ribonuclease H-like"/>
    <property type="match status" value="1"/>
</dbReference>